<reference key="1">
    <citation type="journal article" date="1997" name="Nature">
        <title>The complete genome sequence of the Gram-positive bacterium Bacillus subtilis.</title>
        <authorList>
            <person name="Kunst F."/>
            <person name="Ogasawara N."/>
            <person name="Moszer I."/>
            <person name="Albertini A.M."/>
            <person name="Alloni G."/>
            <person name="Azevedo V."/>
            <person name="Bertero M.G."/>
            <person name="Bessieres P."/>
            <person name="Bolotin A."/>
            <person name="Borchert S."/>
            <person name="Borriss R."/>
            <person name="Boursier L."/>
            <person name="Brans A."/>
            <person name="Braun M."/>
            <person name="Brignell S.C."/>
            <person name="Bron S."/>
            <person name="Brouillet S."/>
            <person name="Bruschi C.V."/>
            <person name="Caldwell B."/>
            <person name="Capuano V."/>
            <person name="Carter N.M."/>
            <person name="Choi S.-K."/>
            <person name="Codani J.-J."/>
            <person name="Connerton I.F."/>
            <person name="Cummings N.J."/>
            <person name="Daniel R.A."/>
            <person name="Denizot F."/>
            <person name="Devine K.M."/>
            <person name="Duesterhoeft A."/>
            <person name="Ehrlich S.D."/>
            <person name="Emmerson P.T."/>
            <person name="Entian K.-D."/>
            <person name="Errington J."/>
            <person name="Fabret C."/>
            <person name="Ferrari E."/>
            <person name="Foulger D."/>
            <person name="Fritz C."/>
            <person name="Fujita M."/>
            <person name="Fujita Y."/>
            <person name="Fuma S."/>
            <person name="Galizzi A."/>
            <person name="Galleron N."/>
            <person name="Ghim S.-Y."/>
            <person name="Glaser P."/>
            <person name="Goffeau A."/>
            <person name="Golightly E.J."/>
            <person name="Grandi G."/>
            <person name="Guiseppi G."/>
            <person name="Guy B.J."/>
            <person name="Haga K."/>
            <person name="Haiech J."/>
            <person name="Harwood C.R."/>
            <person name="Henaut A."/>
            <person name="Hilbert H."/>
            <person name="Holsappel S."/>
            <person name="Hosono S."/>
            <person name="Hullo M.-F."/>
            <person name="Itaya M."/>
            <person name="Jones L.-M."/>
            <person name="Joris B."/>
            <person name="Karamata D."/>
            <person name="Kasahara Y."/>
            <person name="Klaerr-Blanchard M."/>
            <person name="Klein C."/>
            <person name="Kobayashi Y."/>
            <person name="Koetter P."/>
            <person name="Koningstein G."/>
            <person name="Krogh S."/>
            <person name="Kumano M."/>
            <person name="Kurita K."/>
            <person name="Lapidus A."/>
            <person name="Lardinois S."/>
            <person name="Lauber J."/>
            <person name="Lazarevic V."/>
            <person name="Lee S.-M."/>
            <person name="Levine A."/>
            <person name="Liu H."/>
            <person name="Masuda S."/>
            <person name="Mauel C."/>
            <person name="Medigue C."/>
            <person name="Medina N."/>
            <person name="Mellado R.P."/>
            <person name="Mizuno M."/>
            <person name="Moestl D."/>
            <person name="Nakai S."/>
            <person name="Noback M."/>
            <person name="Noone D."/>
            <person name="O'Reilly M."/>
            <person name="Ogawa K."/>
            <person name="Ogiwara A."/>
            <person name="Oudega B."/>
            <person name="Park S.-H."/>
            <person name="Parro V."/>
            <person name="Pohl T.M."/>
            <person name="Portetelle D."/>
            <person name="Porwollik S."/>
            <person name="Prescott A.M."/>
            <person name="Presecan E."/>
            <person name="Pujic P."/>
            <person name="Purnelle B."/>
            <person name="Rapoport G."/>
            <person name="Rey M."/>
            <person name="Reynolds S."/>
            <person name="Rieger M."/>
            <person name="Rivolta C."/>
            <person name="Rocha E."/>
            <person name="Roche B."/>
            <person name="Rose M."/>
            <person name="Sadaie Y."/>
            <person name="Sato T."/>
            <person name="Scanlan E."/>
            <person name="Schleich S."/>
            <person name="Schroeter R."/>
            <person name="Scoffone F."/>
            <person name="Sekiguchi J."/>
            <person name="Sekowska A."/>
            <person name="Seror S.J."/>
            <person name="Serror P."/>
            <person name="Shin B.-S."/>
            <person name="Soldo B."/>
            <person name="Sorokin A."/>
            <person name="Tacconi E."/>
            <person name="Takagi T."/>
            <person name="Takahashi H."/>
            <person name="Takemaru K."/>
            <person name="Takeuchi M."/>
            <person name="Tamakoshi A."/>
            <person name="Tanaka T."/>
            <person name="Terpstra P."/>
            <person name="Tognoni A."/>
            <person name="Tosato V."/>
            <person name="Uchiyama S."/>
            <person name="Vandenbol M."/>
            <person name="Vannier F."/>
            <person name="Vassarotti A."/>
            <person name="Viari A."/>
            <person name="Wambutt R."/>
            <person name="Wedler E."/>
            <person name="Wedler H."/>
            <person name="Weitzenegger T."/>
            <person name="Winters P."/>
            <person name="Wipat A."/>
            <person name="Yamamoto H."/>
            <person name="Yamane K."/>
            <person name="Yasumoto K."/>
            <person name="Yata K."/>
            <person name="Yoshida K."/>
            <person name="Yoshikawa H.-F."/>
            <person name="Zumstein E."/>
            <person name="Yoshikawa H."/>
            <person name="Danchin A."/>
        </authorList>
    </citation>
    <scope>NUCLEOTIDE SEQUENCE [LARGE SCALE GENOMIC DNA]</scope>
    <source>
        <strain>168</strain>
    </source>
</reference>
<reference key="2">
    <citation type="journal article" date="2000" name="Microbiology">
        <title>Proteome analysis of Bacillus subtilis extracellular proteins: a two-dimensional protein electrophoretic study.</title>
        <authorList>
            <person name="Hirose I."/>
            <person name="Sano K."/>
            <person name="Shioda I."/>
            <person name="Kumano M."/>
            <person name="Nakamura K."/>
            <person name="Yamane K."/>
        </authorList>
    </citation>
    <scope>PROTEIN SEQUENCE OF 28-38</scope>
    <scope>SUBCELLULAR LOCATION</scope>
    <source>
        <strain>168</strain>
    </source>
</reference>
<reference key="3">
    <citation type="journal article" date="2004" name="Gene">
        <title>Systematic analysis of SigD-regulated genes in Bacillus subtilis by DNA microarray and Northern blotting analyses.</title>
        <authorList>
            <person name="Serizawa M."/>
            <person name="Yamamoto H."/>
            <person name="Yamaguchi H."/>
            <person name="Fujita Y."/>
            <person name="Kobayashi K."/>
            <person name="Ogasawara N."/>
            <person name="Sekiguchi J."/>
        </authorList>
    </citation>
    <scope>INDUCTION</scope>
    <source>
        <strain>168</strain>
    </source>
</reference>
<accession>O31737</accession>
<organism>
    <name type="scientific">Bacillus subtilis (strain 168)</name>
    <dbReference type="NCBI Taxonomy" id="224308"/>
    <lineage>
        <taxon>Bacteria</taxon>
        <taxon>Bacillati</taxon>
        <taxon>Bacillota</taxon>
        <taxon>Bacilli</taxon>
        <taxon>Bacillales</taxon>
        <taxon>Bacillaceae</taxon>
        <taxon>Bacillus</taxon>
    </lineage>
</organism>
<evidence type="ECO:0000269" key="1">
    <source>
    </source>
</evidence>
<evidence type="ECO:0000269" key="2">
    <source>
    </source>
</evidence>
<sequence>MKKIGLLFMLCLAALFTIGFPAQQADAAEAPYKASITNISTDGGVYGKINYGQGQYWRVKYNITVSGKLLDQNGQPVPNAPVRFEADTKVGNTTQTASGTTDANGTFEVPMYLGPAAGYYTYYTSVSVHYYDIIPFRVFSGESRLVSTDNSLYHFAYQVRR</sequence>
<comment type="subcellular location">
    <subcellularLocation>
        <location evidence="1">Secreted</location>
    </subcellularLocation>
</comment>
<comment type="induction">
    <text evidence="2">Transcriptionally regulated by SigD.</text>
</comment>
<name>YLQB_BACSU</name>
<feature type="signal peptide" evidence="1">
    <location>
        <begin position="1"/>
        <end position="27"/>
    </location>
</feature>
<feature type="chain" id="PRO_0000359516" description="Uncharacterized protein YlqB">
    <location>
        <begin position="28"/>
        <end position="161"/>
    </location>
</feature>
<proteinExistence type="evidence at protein level"/>
<keyword id="KW-0903">Direct protein sequencing</keyword>
<keyword id="KW-1185">Reference proteome</keyword>
<keyword id="KW-0964">Secreted</keyword>
<keyword id="KW-0732">Signal</keyword>
<protein>
    <recommendedName>
        <fullName>Uncharacterized protein YlqB</fullName>
    </recommendedName>
</protein>
<dbReference type="EMBL" id="AL009126">
    <property type="protein sequence ID" value="CAB13469.1"/>
    <property type="molecule type" value="Genomic_DNA"/>
</dbReference>
<dbReference type="PIR" id="B69880">
    <property type="entry name" value="B69880"/>
</dbReference>
<dbReference type="RefSeq" id="NP_389478.1">
    <property type="nucleotide sequence ID" value="NC_000964.3"/>
</dbReference>
<dbReference type="RefSeq" id="WP_003245834.1">
    <property type="nucleotide sequence ID" value="NZ_OZ025638.1"/>
</dbReference>
<dbReference type="FunCoup" id="O31737">
    <property type="interactions" value="10"/>
</dbReference>
<dbReference type="STRING" id="224308.BSU15960"/>
<dbReference type="PaxDb" id="224308-BSU15960"/>
<dbReference type="EnsemblBacteria" id="CAB13469">
    <property type="protein sequence ID" value="CAB13469"/>
    <property type="gene ID" value="BSU_15960"/>
</dbReference>
<dbReference type="GeneID" id="938179"/>
<dbReference type="KEGG" id="bsu:BSU15960"/>
<dbReference type="PATRIC" id="fig|224308.179.peg.1736"/>
<dbReference type="eggNOG" id="ENOG502ZJQW">
    <property type="taxonomic scope" value="Bacteria"/>
</dbReference>
<dbReference type="InParanoid" id="O31737"/>
<dbReference type="OrthoDB" id="2586265at2"/>
<dbReference type="BioCyc" id="BSUB:BSU15960-MONOMER"/>
<dbReference type="Proteomes" id="UP000001570">
    <property type="component" value="Chromosome"/>
</dbReference>
<dbReference type="GO" id="GO:0005576">
    <property type="term" value="C:extracellular region"/>
    <property type="evidence" value="ECO:0007669"/>
    <property type="project" value="UniProtKB-SubCell"/>
</dbReference>
<dbReference type="Gene3D" id="2.60.40.10">
    <property type="entry name" value="Immunoglobulins"/>
    <property type="match status" value="1"/>
</dbReference>
<dbReference type="InterPro" id="IPR008969">
    <property type="entry name" value="CarboxyPept-like_regulatory"/>
</dbReference>
<dbReference type="InterPro" id="IPR013783">
    <property type="entry name" value="Ig-like_fold"/>
</dbReference>
<dbReference type="SUPFAM" id="SSF49464">
    <property type="entry name" value="Carboxypeptidase regulatory domain-like"/>
    <property type="match status" value="1"/>
</dbReference>
<gene>
    <name type="primary">ylqB</name>
    <name type="ordered locus">BSU15960</name>
</gene>